<feature type="chain" id="PRO_0000230424" description="Small ribosomal subunit protein uS11">
    <location>
        <begin position="1"/>
        <end position="132"/>
    </location>
</feature>
<gene>
    <name evidence="1" type="primary">rpsK</name>
    <name type="ordered locus">Reut_A3156</name>
</gene>
<organism>
    <name type="scientific">Cupriavidus pinatubonensis (strain JMP 134 / LMG 1197)</name>
    <name type="common">Cupriavidus necator (strain JMP 134)</name>
    <dbReference type="NCBI Taxonomy" id="264198"/>
    <lineage>
        <taxon>Bacteria</taxon>
        <taxon>Pseudomonadati</taxon>
        <taxon>Pseudomonadota</taxon>
        <taxon>Betaproteobacteria</taxon>
        <taxon>Burkholderiales</taxon>
        <taxon>Burkholderiaceae</taxon>
        <taxon>Cupriavidus</taxon>
    </lineage>
</organism>
<dbReference type="EMBL" id="CP000090">
    <property type="protein sequence ID" value="AAZ62516.1"/>
    <property type="molecule type" value="Genomic_DNA"/>
</dbReference>
<dbReference type="SMR" id="Q46WG7"/>
<dbReference type="STRING" id="264198.Reut_A3156"/>
<dbReference type="KEGG" id="reu:Reut_A3156"/>
<dbReference type="eggNOG" id="COG0100">
    <property type="taxonomic scope" value="Bacteria"/>
</dbReference>
<dbReference type="HOGENOM" id="CLU_072439_5_0_4"/>
<dbReference type="OrthoDB" id="9806415at2"/>
<dbReference type="GO" id="GO:1990904">
    <property type="term" value="C:ribonucleoprotein complex"/>
    <property type="evidence" value="ECO:0007669"/>
    <property type="project" value="UniProtKB-KW"/>
</dbReference>
<dbReference type="GO" id="GO:0005840">
    <property type="term" value="C:ribosome"/>
    <property type="evidence" value="ECO:0007669"/>
    <property type="project" value="UniProtKB-KW"/>
</dbReference>
<dbReference type="GO" id="GO:0019843">
    <property type="term" value="F:rRNA binding"/>
    <property type="evidence" value="ECO:0007669"/>
    <property type="project" value="UniProtKB-UniRule"/>
</dbReference>
<dbReference type="GO" id="GO:0003735">
    <property type="term" value="F:structural constituent of ribosome"/>
    <property type="evidence" value="ECO:0007669"/>
    <property type="project" value="InterPro"/>
</dbReference>
<dbReference type="GO" id="GO:0006412">
    <property type="term" value="P:translation"/>
    <property type="evidence" value="ECO:0007669"/>
    <property type="project" value="UniProtKB-UniRule"/>
</dbReference>
<dbReference type="FunFam" id="3.30.420.80:FF:000001">
    <property type="entry name" value="30S ribosomal protein S11"/>
    <property type="match status" value="1"/>
</dbReference>
<dbReference type="Gene3D" id="3.30.420.80">
    <property type="entry name" value="Ribosomal protein S11"/>
    <property type="match status" value="1"/>
</dbReference>
<dbReference type="HAMAP" id="MF_01310">
    <property type="entry name" value="Ribosomal_uS11"/>
    <property type="match status" value="1"/>
</dbReference>
<dbReference type="InterPro" id="IPR001971">
    <property type="entry name" value="Ribosomal_uS11"/>
</dbReference>
<dbReference type="InterPro" id="IPR019981">
    <property type="entry name" value="Ribosomal_uS11_bac-type"/>
</dbReference>
<dbReference type="InterPro" id="IPR018102">
    <property type="entry name" value="Ribosomal_uS11_CS"/>
</dbReference>
<dbReference type="InterPro" id="IPR036967">
    <property type="entry name" value="Ribosomal_uS11_sf"/>
</dbReference>
<dbReference type="NCBIfam" id="NF003698">
    <property type="entry name" value="PRK05309.1"/>
    <property type="match status" value="1"/>
</dbReference>
<dbReference type="NCBIfam" id="TIGR03632">
    <property type="entry name" value="uS11_bact"/>
    <property type="match status" value="1"/>
</dbReference>
<dbReference type="PANTHER" id="PTHR11759">
    <property type="entry name" value="40S RIBOSOMAL PROTEIN S14/30S RIBOSOMAL PROTEIN S11"/>
    <property type="match status" value="1"/>
</dbReference>
<dbReference type="Pfam" id="PF00411">
    <property type="entry name" value="Ribosomal_S11"/>
    <property type="match status" value="1"/>
</dbReference>
<dbReference type="PIRSF" id="PIRSF002131">
    <property type="entry name" value="Ribosomal_S11"/>
    <property type="match status" value="1"/>
</dbReference>
<dbReference type="SUPFAM" id="SSF53137">
    <property type="entry name" value="Translational machinery components"/>
    <property type="match status" value="1"/>
</dbReference>
<dbReference type="PROSITE" id="PS00054">
    <property type="entry name" value="RIBOSOMAL_S11"/>
    <property type="match status" value="1"/>
</dbReference>
<sequence>MAKGPNNAARARKKVKKNVADGIAHVHASFNNTIITITDRQGNALSWATAGGQGFKGSRKSTPFAAQVAAENAGRVAQDQGIKNLEVRIKGPGPGRESAVRALNALGIKIAIIEDVTPIPHNGCRPPKRRRI</sequence>
<keyword id="KW-0687">Ribonucleoprotein</keyword>
<keyword id="KW-0689">Ribosomal protein</keyword>
<keyword id="KW-0694">RNA-binding</keyword>
<keyword id="KW-0699">rRNA-binding</keyword>
<comment type="function">
    <text evidence="1">Located on the platform of the 30S subunit, it bridges several disparate RNA helices of the 16S rRNA. Forms part of the Shine-Dalgarno cleft in the 70S ribosome.</text>
</comment>
<comment type="subunit">
    <text evidence="1">Part of the 30S ribosomal subunit. Interacts with proteins S7 and S18. Binds to IF-3.</text>
</comment>
<comment type="similarity">
    <text evidence="1">Belongs to the universal ribosomal protein uS11 family.</text>
</comment>
<accession>Q46WG7</accession>
<name>RS11_CUPPJ</name>
<proteinExistence type="inferred from homology"/>
<reference key="1">
    <citation type="journal article" date="2010" name="PLoS ONE">
        <title>The complete multipartite genome sequence of Cupriavidus necator JMP134, a versatile pollutant degrader.</title>
        <authorList>
            <person name="Lykidis A."/>
            <person name="Perez-Pantoja D."/>
            <person name="Ledger T."/>
            <person name="Mavromatis K."/>
            <person name="Anderson I.J."/>
            <person name="Ivanova N.N."/>
            <person name="Hooper S.D."/>
            <person name="Lapidus A."/>
            <person name="Lucas S."/>
            <person name="Gonzalez B."/>
            <person name="Kyrpides N.C."/>
        </authorList>
    </citation>
    <scope>NUCLEOTIDE SEQUENCE [LARGE SCALE GENOMIC DNA]</scope>
    <source>
        <strain>JMP134 / LMG 1197</strain>
    </source>
</reference>
<evidence type="ECO:0000255" key="1">
    <source>
        <dbReference type="HAMAP-Rule" id="MF_01310"/>
    </source>
</evidence>
<evidence type="ECO:0000305" key="2"/>
<protein>
    <recommendedName>
        <fullName evidence="1">Small ribosomal subunit protein uS11</fullName>
    </recommendedName>
    <alternativeName>
        <fullName evidence="2">30S ribosomal protein S11</fullName>
    </alternativeName>
</protein>